<reference key="1">
    <citation type="journal article" date="1986" name="Nucleic Acids Res.">
        <title>DNA sequence of Rhizobium trifolii nodulation genes reveals a reiterated and potentially regulatory sequence preceding nodABC and nodFE.</title>
        <authorList>
            <person name="Schofield P.R."/>
            <person name="Watson J.M."/>
        </authorList>
    </citation>
    <scope>NUCLEOTIDE SEQUENCE [GENOMIC DNA] OF 1-112</scope>
    <source>
        <strain>ANU 843</strain>
    </source>
</reference>
<reference key="2">
    <citation type="journal article" date="1995" name="J. Bacteriol.">
        <title>Phylogeny of Sym plasmids of rhizobia by PCR-based sequencing of a nodC segment.</title>
        <authorList>
            <person name="Ueda T."/>
            <person name="Suga Y."/>
            <person name="Yahiro N."/>
            <person name="Matsuguchi T."/>
        </authorList>
    </citation>
    <scope>NUCLEOTIDE SEQUENCE [GENOMIC DNA] OF 92-182</scope>
    <source>
        <strain>USDA 2161</strain>
    </source>
</reference>
<feature type="chain" id="PRO_0000197190" description="N-acetylglucosaminyltransferase">
    <location>
        <begin position="1"/>
        <end position="182" status="greater than"/>
    </location>
</feature>
<feature type="non-terminal residue">
    <location>
        <position position="182"/>
    </location>
</feature>
<proteinExistence type="inferred from homology"/>
<dbReference type="EC" id="2.4.1.-"/>
<dbReference type="EMBL" id="X03721">
    <property type="protein sequence ID" value="CAA27351.1"/>
    <property type="molecule type" value="Genomic_DNA"/>
</dbReference>
<dbReference type="EMBL" id="D28959">
    <property type="protein sequence ID" value="BAA06085.1"/>
    <property type="molecule type" value="Genomic_DNA"/>
</dbReference>
<dbReference type="PIR" id="C23766">
    <property type="entry name" value="C23766"/>
</dbReference>
<dbReference type="SMR" id="P04678"/>
<dbReference type="CAZy" id="GT2">
    <property type="family name" value="Glycosyltransferase Family 2"/>
</dbReference>
<dbReference type="GO" id="GO:0005886">
    <property type="term" value="C:plasma membrane"/>
    <property type="evidence" value="ECO:0007669"/>
    <property type="project" value="UniProtKB-SubCell"/>
</dbReference>
<dbReference type="GO" id="GO:0050501">
    <property type="term" value="F:hyaluronan synthase activity"/>
    <property type="evidence" value="ECO:0007669"/>
    <property type="project" value="TreeGrafter"/>
</dbReference>
<dbReference type="GO" id="GO:0085029">
    <property type="term" value="P:extracellular matrix assembly"/>
    <property type="evidence" value="ECO:0007669"/>
    <property type="project" value="TreeGrafter"/>
</dbReference>
<dbReference type="GO" id="GO:0030213">
    <property type="term" value="P:hyaluronan biosynthetic process"/>
    <property type="evidence" value="ECO:0007669"/>
    <property type="project" value="TreeGrafter"/>
</dbReference>
<dbReference type="CDD" id="cd06423">
    <property type="entry name" value="CESA_like"/>
    <property type="match status" value="1"/>
</dbReference>
<dbReference type="Gene3D" id="3.90.550.10">
    <property type="entry name" value="Spore Coat Polysaccharide Biosynthesis Protein SpsA, Chain A"/>
    <property type="match status" value="1"/>
</dbReference>
<dbReference type="InterPro" id="IPR001173">
    <property type="entry name" value="Glyco_trans_2-like"/>
</dbReference>
<dbReference type="InterPro" id="IPR029044">
    <property type="entry name" value="Nucleotide-diphossugar_trans"/>
</dbReference>
<dbReference type="PANTHER" id="PTHR22913">
    <property type="entry name" value="HYALURONAN SYNTHASE"/>
    <property type="match status" value="1"/>
</dbReference>
<dbReference type="PANTHER" id="PTHR22913:SF12">
    <property type="entry name" value="MANNURONAN SYNTHASE"/>
    <property type="match status" value="1"/>
</dbReference>
<dbReference type="Pfam" id="PF00535">
    <property type="entry name" value="Glycos_transf_2"/>
    <property type="match status" value="1"/>
</dbReference>
<dbReference type="SUPFAM" id="SSF53448">
    <property type="entry name" value="Nucleotide-diphospho-sugar transferases"/>
    <property type="match status" value="1"/>
</dbReference>
<gene>
    <name type="primary">nodC</name>
</gene>
<keyword id="KW-1003">Cell membrane</keyword>
<keyword id="KW-0328">Glycosyltransferase</keyword>
<keyword id="KW-0472">Membrane</keyword>
<keyword id="KW-0536">Nodulation</keyword>
<keyword id="KW-0614">Plasmid</keyword>
<keyword id="KW-0808">Transferase</keyword>
<geneLocation type="plasmid">
    <name>sym pRtr843e</name>
</geneLocation>
<accession>P04678</accession>
<evidence type="ECO:0000305" key="1"/>
<protein>
    <recommendedName>
        <fullName>N-acetylglucosaminyltransferase</fullName>
        <ecNumber>2.4.1.-</ecNumber>
    </recommendedName>
    <alternativeName>
        <fullName>Nodulation protein C</fullName>
    </alternativeName>
</protein>
<comment type="function">
    <text>Involved in the synthesis of Nod factor, a sulfated N-acyl-beta-1,4-tetrasaccharide of N-acetylglucosamine which initiates a series of events in the host plant species leading eventually to nodulation.</text>
</comment>
<comment type="subcellular location">
    <subcellularLocation>
        <location evidence="1">Cell membrane</location>
        <topology evidence="1">Peripheral membrane protein</topology>
    </subcellularLocation>
</comment>
<comment type="similarity">
    <text evidence="1">Belongs to the NodC/HAS family.</text>
</comment>
<name>NODC_RHILT</name>
<sequence length="182" mass="19703">MTLLETTSIAAVSLYGLLSSSYRSVQVLHAFRTLKSETAENTVEESSLPSVDIIVPSFNESPARPVRLPGIPCQPRSYPGMLRVYVADDGSRNRDAVVAEQLAYAGDARFEFIMLPRNVGKRKAQIAAISRSSGDLILNVDSDTTLASDVVSKLSQKMRDPAVGAVMGQLVASNQSDSWLTR</sequence>
<organism>
    <name type="scientific">Rhizobium leguminosarum bv. trifolii</name>
    <dbReference type="NCBI Taxonomy" id="386"/>
    <lineage>
        <taxon>Bacteria</taxon>
        <taxon>Pseudomonadati</taxon>
        <taxon>Pseudomonadota</taxon>
        <taxon>Alphaproteobacteria</taxon>
        <taxon>Hyphomicrobiales</taxon>
        <taxon>Rhizobiaceae</taxon>
        <taxon>Rhizobium/Agrobacterium group</taxon>
        <taxon>Rhizobium</taxon>
    </lineage>
</organism>